<keyword id="KW-1003">Cell membrane</keyword>
<keyword id="KW-0325">Glycoprotein</keyword>
<keyword id="KW-0472">Membrane</keyword>
<keyword id="KW-1185">Reference proteome</keyword>
<keyword id="KW-0812">Transmembrane</keyword>
<keyword id="KW-1133">Transmembrane helix</keyword>
<name>CSPLC_ORYSJ</name>
<organism>
    <name type="scientific">Oryza sativa subsp. japonica</name>
    <name type="common">Rice</name>
    <dbReference type="NCBI Taxonomy" id="39947"/>
    <lineage>
        <taxon>Eukaryota</taxon>
        <taxon>Viridiplantae</taxon>
        <taxon>Streptophyta</taxon>
        <taxon>Embryophyta</taxon>
        <taxon>Tracheophyta</taxon>
        <taxon>Spermatophyta</taxon>
        <taxon>Magnoliopsida</taxon>
        <taxon>Liliopsida</taxon>
        <taxon>Poales</taxon>
        <taxon>Poaceae</taxon>
        <taxon>BOP clade</taxon>
        <taxon>Oryzoideae</taxon>
        <taxon>Oryzeae</taxon>
        <taxon>Oryzinae</taxon>
        <taxon>Oryza</taxon>
        <taxon>Oryza sativa</taxon>
    </lineage>
</organism>
<feature type="chain" id="PRO_0000370299" description="CASP-like protein 3A1">
    <location>
        <begin position="1"/>
        <end position="204"/>
    </location>
</feature>
<feature type="topological domain" description="Cytoplasmic" evidence="2">
    <location>
        <begin position="1"/>
        <end position="39"/>
    </location>
</feature>
<feature type="transmembrane region" description="Helical" evidence="2">
    <location>
        <begin position="40"/>
        <end position="60"/>
    </location>
</feature>
<feature type="topological domain" description="Extracellular" evidence="2">
    <location>
        <begin position="61"/>
        <end position="88"/>
    </location>
</feature>
<feature type="transmembrane region" description="Helical" evidence="2">
    <location>
        <begin position="89"/>
        <end position="109"/>
    </location>
</feature>
<feature type="topological domain" description="Cytoplasmic" evidence="2">
    <location>
        <begin position="110"/>
        <end position="124"/>
    </location>
</feature>
<feature type="transmembrane region" description="Helical" evidence="2">
    <location>
        <begin position="125"/>
        <end position="145"/>
    </location>
</feature>
<feature type="topological domain" description="Extracellular" evidence="2">
    <location>
        <begin position="146"/>
        <end position="179"/>
    </location>
</feature>
<feature type="transmembrane region" description="Helical" evidence="2">
    <location>
        <begin position="180"/>
        <end position="200"/>
    </location>
</feature>
<feature type="topological domain" description="Cytoplasmic" evidence="2">
    <location>
        <begin position="201"/>
        <end position="204"/>
    </location>
</feature>
<feature type="glycosylation site" description="N-linked (GlcNAc...) asparagine" evidence="2">
    <location>
        <position position="80"/>
    </location>
</feature>
<feature type="glycosylation site" description="N-linked (GlcNAc...) asparagine" evidence="2">
    <location>
        <position position="153"/>
    </location>
</feature>
<reference key="1">
    <citation type="journal article" date="2002" name="Nature">
        <title>The genome sequence and structure of rice chromosome 1.</title>
        <authorList>
            <person name="Sasaki T."/>
            <person name="Matsumoto T."/>
            <person name="Yamamoto K."/>
            <person name="Sakata K."/>
            <person name="Baba T."/>
            <person name="Katayose Y."/>
            <person name="Wu J."/>
            <person name="Niimura Y."/>
            <person name="Cheng Z."/>
            <person name="Nagamura Y."/>
            <person name="Antonio B.A."/>
            <person name="Kanamori H."/>
            <person name="Hosokawa S."/>
            <person name="Masukawa M."/>
            <person name="Arikawa K."/>
            <person name="Chiden Y."/>
            <person name="Hayashi M."/>
            <person name="Okamoto M."/>
            <person name="Ando T."/>
            <person name="Aoki H."/>
            <person name="Arita K."/>
            <person name="Hamada M."/>
            <person name="Harada C."/>
            <person name="Hijishita S."/>
            <person name="Honda M."/>
            <person name="Ichikawa Y."/>
            <person name="Idonuma A."/>
            <person name="Iijima M."/>
            <person name="Ikeda M."/>
            <person name="Ikeno M."/>
            <person name="Ito S."/>
            <person name="Ito T."/>
            <person name="Ito Y."/>
            <person name="Ito Y."/>
            <person name="Iwabuchi A."/>
            <person name="Kamiya K."/>
            <person name="Karasawa W."/>
            <person name="Katagiri S."/>
            <person name="Kikuta A."/>
            <person name="Kobayashi N."/>
            <person name="Kono I."/>
            <person name="Machita K."/>
            <person name="Maehara T."/>
            <person name="Mizuno H."/>
            <person name="Mizubayashi T."/>
            <person name="Mukai Y."/>
            <person name="Nagasaki H."/>
            <person name="Nakashima M."/>
            <person name="Nakama Y."/>
            <person name="Nakamichi Y."/>
            <person name="Nakamura M."/>
            <person name="Namiki N."/>
            <person name="Negishi M."/>
            <person name="Ohta I."/>
            <person name="Ono N."/>
            <person name="Saji S."/>
            <person name="Sakai K."/>
            <person name="Shibata M."/>
            <person name="Shimokawa T."/>
            <person name="Shomura A."/>
            <person name="Song J."/>
            <person name="Takazaki Y."/>
            <person name="Terasawa K."/>
            <person name="Tsuji K."/>
            <person name="Waki K."/>
            <person name="Yamagata H."/>
            <person name="Yamane H."/>
            <person name="Yoshiki S."/>
            <person name="Yoshihara R."/>
            <person name="Yukawa K."/>
            <person name="Zhong H."/>
            <person name="Iwama H."/>
            <person name="Endo T."/>
            <person name="Ito H."/>
            <person name="Hahn J.H."/>
            <person name="Kim H.-I."/>
            <person name="Eun M.-Y."/>
            <person name="Yano M."/>
            <person name="Jiang J."/>
            <person name="Gojobori T."/>
        </authorList>
    </citation>
    <scope>NUCLEOTIDE SEQUENCE [LARGE SCALE GENOMIC DNA]</scope>
    <source>
        <strain>cv. Nipponbare</strain>
    </source>
</reference>
<reference key="2">
    <citation type="journal article" date="2005" name="Nature">
        <title>The map-based sequence of the rice genome.</title>
        <authorList>
            <consortium name="International rice genome sequencing project (IRGSP)"/>
        </authorList>
    </citation>
    <scope>NUCLEOTIDE SEQUENCE [LARGE SCALE GENOMIC DNA]</scope>
    <source>
        <strain>cv. Nipponbare</strain>
    </source>
</reference>
<reference key="3">
    <citation type="journal article" date="2008" name="Nucleic Acids Res.">
        <title>The rice annotation project database (RAP-DB): 2008 update.</title>
        <authorList>
            <consortium name="The rice annotation project (RAP)"/>
        </authorList>
    </citation>
    <scope>GENOME REANNOTATION</scope>
    <source>
        <strain>cv. Nipponbare</strain>
    </source>
</reference>
<reference key="4">
    <citation type="journal article" date="2013" name="Rice">
        <title>Improvement of the Oryza sativa Nipponbare reference genome using next generation sequence and optical map data.</title>
        <authorList>
            <person name="Kawahara Y."/>
            <person name="de la Bastide M."/>
            <person name="Hamilton J.P."/>
            <person name="Kanamori H."/>
            <person name="McCombie W.R."/>
            <person name="Ouyang S."/>
            <person name="Schwartz D.C."/>
            <person name="Tanaka T."/>
            <person name="Wu J."/>
            <person name="Zhou S."/>
            <person name="Childs K.L."/>
            <person name="Davidson R.M."/>
            <person name="Lin H."/>
            <person name="Quesada-Ocampo L."/>
            <person name="Vaillancourt B."/>
            <person name="Sakai H."/>
            <person name="Lee S.S."/>
            <person name="Kim J."/>
            <person name="Numa H."/>
            <person name="Itoh T."/>
            <person name="Buell C.R."/>
            <person name="Matsumoto T."/>
        </authorList>
    </citation>
    <scope>GENOME REANNOTATION</scope>
    <source>
        <strain>cv. Nipponbare</strain>
    </source>
</reference>
<reference key="5">
    <citation type="journal article" date="2005" name="PLoS Biol.">
        <title>The genomes of Oryza sativa: a history of duplications.</title>
        <authorList>
            <person name="Yu J."/>
            <person name="Wang J."/>
            <person name="Lin W."/>
            <person name="Li S."/>
            <person name="Li H."/>
            <person name="Zhou J."/>
            <person name="Ni P."/>
            <person name="Dong W."/>
            <person name="Hu S."/>
            <person name="Zeng C."/>
            <person name="Zhang J."/>
            <person name="Zhang Y."/>
            <person name="Li R."/>
            <person name="Xu Z."/>
            <person name="Li S."/>
            <person name="Li X."/>
            <person name="Zheng H."/>
            <person name="Cong L."/>
            <person name="Lin L."/>
            <person name="Yin J."/>
            <person name="Geng J."/>
            <person name="Li G."/>
            <person name="Shi J."/>
            <person name="Liu J."/>
            <person name="Lv H."/>
            <person name="Li J."/>
            <person name="Wang J."/>
            <person name="Deng Y."/>
            <person name="Ran L."/>
            <person name="Shi X."/>
            <person name="Wang X."/>
            <person name="Wu Q."/>
            <person name="Li C."/>
            <person name="Ren X."/>
            <person name="Wang J."/>
            <person name="Wang X."/>
            <person name="Li D."/>
            <person name="Liu D."/>
            <person name="Zhang X."/>
            <person name="Ji Z."/>
            <person name="Zhao W."/>
            <person name="Sun Y."/>
            <person name="Zhang Z."/>
            <person name="Bao J."/>
            <person name="Han Y."/>
            <person name="Dong L."/>
            <person name="Ji J."/>
            <person name="Chen P."/>
            <person name="Wu S."/>
            <person name="Liu J."/>
            <person name="Xiao Y."/>
            <person name="Bu D."/>
            <person name="Tan J."/>
            <person name="Yang L."/>
            <person name="Ye C."/>
            <person name="Zhang J."/>
            <person name="Xu J."/>
            <person name="Zhou Y."/>
            <person name="Yu Y."/>
            <person name="Zhang B."/>
            <person name="Zhuang S."/>
            <person name="Wei H."/>
            <person name="Liu B."/>
            <person name="Lei M."/>
            <person name="Yu H."/>
            <person name="Li Y."/>
            <person name="Xu H."/>
            <person name="Wei S."/>
            <person name="He X."/>
            <person name="Fang L."/>
            <person name="Zhang Z."/>
            <person name="Zhang Y."/>
            <person name="Huang X."/>
            <person name="Su Z."/>
            <person name="Tong W."/>
            <person name="Li J."/>
            <person name="Tong Z."/>
            <person name="Li S."/>
            <person name="Ye J."/>
            <person name="Wang L."/>
            <person name="Fang L."/>
            <person name="Lei T."/>
            <person name="Chen C.-S."/>
            <person name="Chen H.-C."/>
            <person name="Xu Z."/>
            <person name="Li H."/>
            <person name="Huang H."/>
            <person name="Zhang F."/>
            <person name="Xu H."/>
            <person name="Li N."/>
            <person name="Zhao C."/>
            <person name="Li S."/>
            <person name="Dong L."/>
            <person name="Huang Y."/>
            <person name="Li L."/>
            <person name="Xi Y."/>
            <person name="Qi Q."/>
            <person name="Li W."/>
            <person name="Zhang B."/>
            <person name="Hu W."/>
            <person name="Zhang Y."/>
            <person name="Tian X."/>
            <person name="Jiao Y."/>
            <person name="Liang X."/>
            <person name="Jin J."/>
            <person name="Gao L."/>
            <person name="Zheng W."/>
            <person name="Hao B."/>
            <person name="Liu S.-M."/>
            <person name="Wang W."/>
            <person name="Yuan L."/>
            <person name="Cao M."/>
            <person name="McDermott J."/>
            <person name="Samudrala R."/>
            <person name="Wang J."/>
            <person name="Wong G.K.-S."/>
            <person name="Yang H."/>
        </authorList>
    </citation>
    <scope>NUCLEOTIDE SEQUENCE [LARGE SCALE GENOMIC DNA]</scope>
    <source>
        <strain>cv. Nipponbare</strain>
    </source>
</reference>
<reference key="6">
    <citation type="journal article" date="2003" name="Science">
        <title>Collection, mapping, and annotation of over 28,000 cDNA clones from japonica rice.</title>
        <authorList>
            <consortium name="The rice full-length cDNA consortium"/>
        </authorList>
    </citation>
    <scope>NUCLEOTIDE SEQUENCE [LARGE SCALE MRNA]</scope>
    <source>
        <strain>cv. Nipponbare</strain>
    </source>
</reference>
<reference key="7">
    <citation type="journal article" date="2014" name="Plant Physiol.">
        <title>Functional and evolutionary analysis of the CASPARIAN STRIP MEMBRANE DOMAIN PROTEIN family.</title>
        <authorList>
            <person name="Roppolo D."/>
            <person name="Boeckmann B."/>
            <person name="Pfister A."/>
            <person name="Boutet E."/>
            <person name="Rubio M.C."/>
            <person name="Denervaud-Tendon V."/>
            <person name="Vermeer J.E."/>
            <person name="Gheyselinck J."/>
            <person name="Xenarios I."/>
            <person name="Geldner N."/>
        </authorList>
    </citation>
    <scope>GENE FAMILY</scope>
    <scope>NOMENCLATURE</scope>
</reference>
<gene>
    <name type="ordered locus">Os01g0725400</name>
    <name type="ordered locus">LOC_Os01g52610</name>
    <name type="ORF">OsJ_03314</name>
    <name type="ORF">P0022F10.36</name>
    <name type="ORF">P0042A10.11</name>
</gene>
<proteinExistence type="evidence at transcript level"/>
<comment type="subunit">
    <text evidence="1">Homodimer and heterodimers.</text>
</comment>
<comment type="subcellular location">
    <subcellularLocation>
        <location evidence="1">Cell membrane</location>
        <topology evidence="1">Multi-pass membrane protein</topology>
    </subcellularLocation>
</comment>
<comment type="similarity">
    <text evidence="3">Belongs to the Casparian strip membrane proteins (CASP) family.</text>
</comment>
<sequence length="204" mass="21771">MGSIGNGRNGSEVGIQIPAMGNKEVLERPAIPRWPRLGVVMVATRAVALVMAVLSMALMISAKQRGSLKIFGIEIPLYANWSFSDSLEYLVGMSAVSAAYCLAQLLLTAHKAVKNAPVVQSRNYAWLLFTGDQIFAYAMMSAGSAAAAVANLNRTGIRHTALPNFCKPLPRFCDLSAASIACAFLSCIFLAASAVIDVIWLSNM</sequence>
<accession>Q5JM57</accession>
<accession>A0A0N7KDN6</accession>
<evidence type="ECO:0000250" key="1"/>
<evidence type="ECO:0000255" key="2"/>
<evidence type="ECO:0000305" key="3"/>
<dbReference type="EMBL" id="AP003229">
    <property type="protein sequence ID" value="BAD87069.1"/>
    <property type="molecule type" value="Genomic_DNA"/>
</dbReference>
<dbReference type="EMBL" id="AP003343">
    <property type="protein sequence ID" value="BAD87450.1"/>
    <property type="molecule type" value="Genomic_DNA"/>
</dbReference>
<dbReference type="EMBL" id="AP008207">
    <property type="protein sequence ID" value="BAF06027.1"/>
    <property type="molecule type" value="Genomic_DNA"/>
</dbReference>
<dbReference type="EMBL" id="AP014957">
    <property type="protein sequence ID" value="BAS74121.1"/>
    <property type="molecule type" value="Genomic_DNA"/>
</dbReference>
<dbReference type="EMBL" id="CM000138">
    <property type="protein sequence ID" value="EEE55317.1"/>
    <property type="molecule type" value="Genomic_DNA"/>
</dbReference>
<dbReference type="EMBL" id="AK073926">
    <property type="protein sequence ID" value="BAG93713.1"/>
    <property type="molecule type" value="mRNA"/>
</dbReference>
<dbReference type="RefSeq" id="XP_015650345.1">
    <property type="nucleotide sequence ID" value="XM_015794859.1"/>
</dbReference>
<dbReference type="FunCoup" id="Q5JM57">
    <property type="interactions" value="813"/>
</dbReference>
<dbReference type="PaxDb" id="39947-Q5JM57"/>
<dbReference type="EnsemblPlants" id="Os01t0725400-01">
    <property type="protein sequence ID" value="Os01t0725400-01"/>
    <property type="gene ID" value="Os01g0725400"/>
</dbReference>
<dbReference type="Gramene" id="Os01t0725400-01">
    <property type="protein sequence ID" value="Os01t0725400-01"/>
    <property type="gene ID" value="Os01g0725400"/>
</dbReference>
<dbReference type="KEGG" id="dosa:Os01g0725400"/>
<dbReference type="eggNOG" id="ENOG502RN9B">
    <property type="taxonomic scope" value="Eukaryota"/>
</dbReference>
<dbReference type="HOGENOM" id="CLU_114729_1_0_1"/>
<dbReference type="InParanoid" id="Q5JM57"/>
<dbReference type="OMA" id="CKPLHKF"/>
<dbReference type="OrthoDB" id="1918787at2759"/>
<dbReference type="Proteomes" id="UP000000763">
    <property type="component" value="Chromosome 1"/>
</dbReference>
<dbReference type="Proteomes" id="UP000007752">
    <property type="component" value="Chromosome 1"/>
</dbReference>
<dbReference type="Proteomes" id="UP000059680">
    <property type="component" value="Chromosome 1"/>
</dbReference>
<dbReference type="GO" id="GO:0005886">
    <property type="term" value="C:plasma membrane"/>
    <property type="evidence" value="ECO:0007669"/>
    <property type="project" value="UniProtKB-SubCell"/>
</dbReference>
<dbReference type="InterPro" id="IPR006459">
    <property type="entry name" value="CASP/CASPL"/>
</dbReference>
<dbReference type="InterPro" id="IPR006702">
    <property type="entry name" value="CASP_dom"/>
</dbReference>
<dbReference type="NCBIfam" id="TIGR01569">
    <property type="entry name" value="A_tha_TIGR01569"/>
    <property type="match status" value="1"/>
</dbReference>
<dbReference type="PANTHER" id="PTHR33573:SF48">
    <property type="entry name" value="CASP-LIKE PROTEIN 3A1"/>
    <property type="match status" value="1"/>
</dbReference>
<dbReference type="PANTHER" id="PTHR33573">
    <property type="entry name" value="CASP-LIKE PROTEIN 4A4"/>
    <property type="match status" value="1"/>
</dbReference>
<dbReference type="Pfam" id="PF04535">
    <property type="entry name" value="CASP_dom"/>
    <property type="match status" value="1"/>
</dbReference>
<protein>
    <recommendedName>
        <fullName>CASP-like protein 3A1</fullName>
        <shortName>OsCASPL3A1</shortName>
    </recommendedName>
</protein>